<accession>Q87BQ0</accession>
<sequence length="215" mass="24283">MKPFTQHTGLVCPLDRVNVDTDQIIPKQFLKSIKRTGFGPNLFDEWRYLDAGQPGQDNSKRPINSDFVLNFPRYRGASVLLARDNFGCGSSREHAAWALDEYGFRTVIAPSFADIFFNNSFKNGLLPLVLNKVEVDALFAQCQVTEGYTLTVDLAAQQVITLDGTTYAFQIDTFRKHCLLNGLDDIGLTLQHAEAIRAFEATHRIRQPWLFAPLR</sequence>
<proteinExistence type="inferred from homology"/>
<keyword id="KW-0028">Amino-acid biosynthesis</keyword>
<keyword id="KW-0100">Branched-chain amino acid biosynthesis</keyword>
<keyword id="KW-0432">Leucine biosynthesis</keyword>
<keyword id="KW-0456">Lyase</keyword>
<keyword id="KW-1185">Reference proteome</keyword>
<name>LEUD_XYLFT</name>
<protein>
    <recommendedName>
        <fullName evidence="1">3-isopropylmalate dehydratase small subunit</fullName>
        <ecNumber evidence="1">4.2.1.33</ecNumber>
    </recommendedName>
    <alternativeName>
        <fullName evidence="1">Alpha-IPM isomerase</fullName>
        <shortName evidence="1">IPMI</shortName>
    </alternativeName>
    <alternativeName>
        <fullName evidence="1">Isopropylmalate isomerase</fullName>
    </alternativeName>
</protein>
<evidence type="ECO:0000255" key="1">
    <source>
        <dbReference type="HAMAP-Rule" id="MF_01031"/>
    </source>
</evidence>
<feature type="chain" id="PRO_0000141916" description="3-isopropylmalate dehydratase small subunit">
    <location>
        <begin position="1"/>
        <end position="215"/>
    </location>
</feature>
<organism>
    <name type="scientific">Xylella fastidiosa (strain Temecula1 / ATCC 700964)</name>
    <dbReference type="NCBI Taxonomy" id="183190"/>
    <lineage>
        <taxon>Bacteria</taxon>
        <taxon>Pseudomonadati</taxon>
        <taxon>Pseudomonadota</taxon>
        <taxon>Gammaproteobacteria</taxon>
        <taxon>Lysobacterales</taxon>
        <taxon>Lysobacteraceae</taxon>
        <taxon>Xylella</taxon>
    </lineage>
</organism>
<dbReference type="EC" id="4.2.1.33" evidence="1"/>
<dbReference type="EMBL" id="AE009442">
    <property type="protein sequence ID" value="AAO29245.1"/>
    <property type="molecule type" value="Genomic_DNA"/>
</dbReference>
<dbReference type="RefSeq" id="WP_004091003.1">
    <property type="nucleotide sequence ID" value="NC_004556.1"/>
</dbReference>
<dbReference type="SMR" id="Q87BQ0"/>
<dbReference type="GeneID" id="93905214"/>
<dbReference type="KEGG" id="xft:PD_1398"/>
<dbReference type="HOGENOM" id="CLU_081378_0_3_6"/>
<dbReference type="UniPathway" id="UPA00048">
    <property type="reaction ID" value="UER00071"/>
</dbReference>
<dbReference type="Proteomes" id="UP000002516">
    <property type="component" value="Chromosome"/>
</dbReference>
<dbReference type="GO" id="GO:0009316">
    <property type="term" value="C:3-isopropylmalate dehydratase complex"/>
    <property type="evidence" value="ECO:0007669"/>
    <property type="project" value="InterPro"/>
</dbReference>
<dbReference type="GO" id="GO:0003861">
    <property type="term" value="F:3-isopropylmalate dehydratase activity"/>
    <property type="evidence" value="ECO:0007669"/>
    <property type="project" value="UniProtKB-UniRule"/>
</dbReference>
<dbReference type="GO" id="GO:0009098">
    <property type="term" value="P:L-leucine biosynthetic process"/>
    <property type="evidence" value="ECO:0007669"/>
    <property type="project" value="UniProtKB-UniRule"/>
</dbReference>
<dbReference type="CDD" id="cd01577">
    <property type="entry name" value="IPMI_Swivel"/>
    <property type="match status" value="1"/>
</dbReference>
<dbReference type="FunFam" id="3.20.19.10:FF:000003">
    <property type="entry name" value="3-isopropylmalate dehydratase small subunit"/>
    <property type="match status" value="1"/>
</dbReference>
<dbReference type="Gene3D" id="3.20.19.10">
    <property type="entry name" value="Aconitase, domain 4"/>
    <property type="match status" value="1"/>
</dbReference>
<dbReference type="HAMAP" id="MF_01031">
    <property type="entry name" value="LeuD_type1"/>
    <property type="match status" value="1"/>
</dbReference>
<dbReference type="InterPro" id="IPR004431">
    <property type="entry name" value="3-IsopropMal_deHydase_ssu"/>
</dbReference>
<dbReference type="InterPro" id="IPR015928">
    <property type="entry name" value="Aconitase/3IPM_dehydase_swvl"/>
</dbReference>
<dbReference type="InterPro" id="IPR000573">
    <property type="entry name" value="AconitaseA/IPMdHydase_ssu_swvl"/>
</dbReference>
<dbReference type="InterPro" id="IPR033940">
    <property type="entry name" value="IPMI_Swivel"/>
</dbReference>
<dbReference type="InterPro" id="IPR050075">
    <property type="entry name" value="LeuD"/>
</dbReference>
<dbReference type="NCBIfam" id="TIGR00171">
    <property type="entry name" value="leuD"/>
    <property type="match status" value="1"/>
</dbReference>
<dbReference type="NCBIfam" id="NF002458">
    <property type="entry name" value="PRK01641.1"/>
    <property type="match status" value="1"/>
</dbReference>
<dbReference type="PANTHER" id="PTHR43345:SF5">
    <property type="entry name" value="3-ISOPROPYLMALATE DEHYDRATASE SMALL SUBUNIT"/>
    <property type="match status" value="1"/>
</dbReference>
<dbReference type="PANTHER" id="PTHR43345">
    <property type="entry name" value="3-ISOPROPYLMALATE DEHYDRATASE SMALL SUBUNIT 2-RELATED-RELATED"/>
    <property type="match status" value="1"/>
</dbReference>
<dbReference type="Pfam" id="PF00694">
    <property type="entry name" value="Aconitase_C"/>
    <property type="match status" value="1"/>
</dbReference>
<dbReference type="SUPFAM" id="SSF52016">
    <property type="entry name" value="LeuD/IlvD-like"/>
    <property type="match status" value="1"/>
</dbReference>
<gene>
    <name evidence="1" type="primary">leuD</name>
    <name type="ordered locus">PD_1398</name>
</gene>
<reference key="1">
    <citation type="journal article" date="2003" name="J. Bacteriol.">
        <title>Comparative analyses of the complete genome sequences of Pierce's disease and citrus variegated chlorosis strains of Xylella fastidiosa.</title>
        <authorList>
            <person name="Van Sluys M.A."/>
            <person name="de Oliveira M.C."/>
            <person name="Monteiro-Vitorello C.B."/>
            <person name="Miyaki C.Y."/>
            <person name="Furlan L.R."/>
            <person name="Camargo L.E.A."/>
            <person name="da Silva A.C.R."/>
            <person name="Moon D.H."/>
            <person name="Takita M.A."/>
            <person name="Lemos E.G.M."/>
            <person name="Machado M.A."/>
            <person name="Ferro M.I.T."/>
            <person name="da Silva F.R."/>
            <person name="Goldman M.H.S."/>
            <person name="Goldman G.H."/>
            <person name="Lemos M.V.F."/>
            <person name="El-Dorry H."/>
            <person name="Tsai S.M."/>
            <person name="Carrer H."/>
            <person name="Carraro D.M."/>
            <person name="de Oliveira R.C."/>
            <person name="Nunes L.R."/>
            <person name="Siqueira W.J."/>
            <person name="Coutinho L.L."/>
            <person name="Kimura E.T."/>
            <person name="Ferro E.S."/>
            <person name="Harakava R."/>
            <person name="Kuramae E.E."/>
            <person name="Marino C.L."/>
            <person name="Giglioti E."/>
            <person name="Abreu I.L."/>
            <person name="Alves L.M.C."/>
            <person name="do Amaral A.M."/>
            <person name="Baia G.S."/>
            <person name="Blanco S.R."/>
            <person name="Brito M.S."/>
            <person name="Cannavan F.S."/>
            <person name="Celestino A.V."/>
            <person name="da Cunha A.F."/>
            <person name="Fenille R.C."/>
            <person name="Ferro J.A."/>
            <person name="Formighieri E.F."/>
            <person name="Kishi L.T."/>
            <person name="Leoni S.G."/>
            <person name="Oliveira A.R."/>
            <person name="Rosa V.E. Jr."/>
            <person name="Sassaki F.T."/>
            <person name="Sena J.A.D."/>
            <person name="de Souza A.A."/>
            <person name="Truffi D."/>
            <person name="Tsukumo F."/>
            <person name="Yanai G.M."/>
            <person name="Zaros L.G."/>
            <person name="Civerolo E.L."/>
            <person name="Simpson A.J.G."/>
            <person name="Almeida N.F. Jr."/>
            <person name="Setubal J.C."/>
            <person name="Kitajima J.P."/>
        </authorList>
    </citation>
    <scope>NUCLEOTIDE SEQUENCE [LARGE SCALE GENOMIC DNA]</scope>
    <source>
        <strain>Temecula1 / ATCC 700964</strain>
    </source>
</reference>
<comment type="function">
    <text evidence="1">Catalyzes the isomerization between 2-isopropylmalate and 3-isopropylmalate, via the formation of 2-isopropylmaleate.</text>
</comment>
<comment type="catalytic activity">
    <reaction evidence="1">
        <text>(2R,3S)-3-isopropylmalate = (2S)-2-isopropylmalate</text>
        <dbReference type="Rhea" id="RHEA:32287"/>
        <dbReference type="ChEBI" id="CHEBI:1178"/>
        <dbReference type="ChEBI" id="CHEBI:35121"/>
        <dbReference type="EC" id="4.2.1.33"/>
    </reaction>
</comment>
<comment type="pathway">
    <text evidence="1">Amino-acid biosynthesis; L-leucine biosynthesis; L-leucine from 3-methyl-2-oxobutanoate: step 2/4.</text>
</comment>
<comment type="subunit">
    <text evidence="1">Heterodimer of LeuC and LeuD.</text>
</comment>
<comment type="similarity">
    <text evidence="1">Belongs to the LeuD family. LeuD type 1 subfamily.</text>
</comment>